<name>CH10_THEBR</name>
<dbReference type="EMBL" id="U56021">
    <property type="protein sequence ID" value="AAB00558.1"/>
    <property type="molecule type" value="Genomic_DNA"/>
</dbReference>
<dbReference type="PIR" id="S72613">
    <property type="entry name" value="S72613"/>
</dbReference>
<dbReference type="SMR" id="Q60023"/>
<dbReference type="GO" id="GO:0005737">
    <property type="term" value="C:cytoplasm"/>
    <property type="evidence" value="ECO:0007669"/>
    <property type="project" value="UniProtKB-SubCell"/>
</dbReference>
<dbReference type="GO" id="GO:0005524">
    <property type="term" value="F:ATP binding"/>
    <property type="evidence" value="ECO:0007669"/>
    <property type="project" value="InterPro"/>
</dbReference>
<dbReference type="GO" id="GO:0046872">
    <property type="term" value="F:metal ion binding"/>
    <property type="evidence" value="ECO:0007669"/>
    <property type="project" value="TreeGrafter"/>
</dbReference>
<dbReference type="GO" id="GO:0044183">
    <property type="term" value="F:protein folding chaperone"/>
    <property type="evidence" value="ECO:0007669"/>
    <property type="project" value="InterPro"/>
</dbReference>
<dbReference type="GO" id="GO:0051087">
    <property type="term" value="F:protein-folding chaperone binding"/>
    <property type="evidence" value="ECO:0007669"/>
    <property type="project" value="TreeGrafter"/>
</dbReference>
<dbReference type="GO" id="GO:0051082">
    <property type="term" value="F:unfolded protein binding"/>
    <property type="evidence" value="ECO:0007669"/>
    <property type="project" value="TreeGrafter"/>
</dbReference>
<dbReference type="GO" id="GO:0051085">
    <property type="term" value="P:chaperone cofactor-dependent protein refolding"/>
    <property type="evidence" value="ECO:0007669"/>
    <property type="project" value="TreeGrafter"/>
</dbReference>
<dbReference type="CDD" id="cd00320">
    <property type="entry name" value="cpn10"/>
    <property type="match status" value="1"/>
</dbReference>
<dbReference type="FunFam" id="2.30.33.40:FF:000001">
    <property type="entry name" value="10 kDa chaperonin"/>
    <property type="match status" value="1"/>
</dbReference>
<dbReference type="Gene3D" id="2.30.33.40">
    <property type="entry name" value="GroES chaperonin"/>
    <property type="match status" value="1"/>
</dbReference>
<dbReference type="HAMAP" id="MF_00580">
    <property type="entry name" value="CH10"/>
    <property type="match status" value="1"/>
</dbReference>
<dbReference type="InterPro" id="IPR020818">
    <property type="entry name" value="Chaperonin_GroES"/>
</dbReference>
<dbReference type="InterPro" id="IPR037124">
    <property type="entry name" value="Chaperonin_GroES_sf"/>
</dbReference>
<dbReference type="InterPro" id="IPR018369">
    <property type="entry name" value="Chaprnonin_Cpn10_CS"/>
</dbReference>
<dbReference type="InterPro" id="IPR011032">
    <property type="entry name" value="GroES-like_sf"/>
</dbReference>
<dbReference type="NCBIfam" id="NF001527">
    <property type="entry name" value="PRK00364.1-2"/>
    <property type="match status" value="1"/>
</dbReference>
<dbReference type="NCBIfam" id="NF001531">
    <property type="entry name" value="PRK00364.2-2"/>
    <property type="match status" value="1"/>
</dbReference>
<dbReference type="NCBIfam" id="NF001533">
    <property type="entry name" value="PRK00364.2-4"/>
    <property type="match status" value="1"/>
</dbReference>
<dbReference type="NCBIfam" id="NF001534">
    <property type="entry name" value="PRK00364.2-5"/>
    <property type="match status" value="1"/>
</dbReference>
<dbReference type="PANTHER" id="PTHR10772">
    <property type="entry name" value="10 KDA HEAT SHOCK PROTEIN"/>
    <property type="match status" value="1"/>
</dbReference>
<dbReference type="PANTHER" id="PTHR10772:SF58">
    <property type="entry name" value="CO-CHAPERONIN GROES"/>
    <property type="match status" value="1"/>
</dbReference>
<dbReference type="Pfam" id="PF00166">
    <property type="entry name" value="Cpn10"/>
    <property type="match status" value="1"/>
</dbReference>
<dbReference type="PRINTS" id="PR00297">
    <property type="entry name" value="CHAPERONIN10"/>
</dbReference>
<dbReference type="SMART" id="SM00883">
    <property type="entry name" value="Cpn10"/>
    <property type="match status" value="1"/>
</dbReference>
<dbReference type="SUPFAM" id="SSF50129">
    <property type="entry name" value="GroES-like"/>
    <property type="match status" value="1"/>
</dbReference>
<dbReference type="PROSITE" id="PS00681">
    <property type="entry name" value="CHAPERONINS_CPN10"/>
    <property type="match status" value="1"/>
</dbReference>
<comment type="function">
    <text evidence="1">Together with the chaperonin GroEL, plays an essential role in assisting protein folding. The GroEL-GroES system forms a nano-cage that allows encapsulation of the non-native substrate proteins and provides a physical environment optimized to promote and accelerate protein folding. GroES binds to the apical surface of the GroEL ring, thereby capping the opening of the GroEL channel.</text>
</comment>
<comment type="subunit">
    <text evidence="1">Heptamer of 7 subunits arranged in a ring. Interacts with the chaperonin GroEL.</text>
</comment>
<comment type="subcellular location">
    <subcellularLocation>
        <location evidence="1">Cytoplasm</location>
    </subcellularLocation>
</comment>
<comment type="mass spectrometry" mass="10254.0" error="0.4" method="Electrospray" evidence="2"/>
<comment type="similarity">
    <text evidence="1 3">Belongs to the GroES chaperonin family.</text>
</comment>
<evidence type="ECO:0000255" key="1">
    <source>
        <dbReference type="HAMAP-Rule" id="MF_00580"/>
    </source>
</evidence>
<evidence type="ECO:0000269" key="2">
    <source>
    </source>
</evidence>
<evidence type="ECO:0000305" key="3"/>
<gene>
    <name evidence="1" type="primary">groES</name>
    <name evidence="1" type="synonym">groS</name>
</gene>
<organism>
    <name type="scientific">Thermoanaerobacter brockii</name>
    <name type="common">Thermoanaerobium brockii</name>
    <dbReference type="NCBI Taxonomy" id="29323"/>
    <lineage>
        <taxon>Bacteria</taxon>
        <taxon>Bacillati</taxon>
        <taxon>Bacillota</taxon>
        <taxon>Clostridia</taxon>
        <taxon>Thermoanaerobacterales</taxon>
        <taxon>Thermoanaerobacteraceae</taxon>
        <taxon>Thermoanaerobacter</taxon>
    </lineage>
</organism>
<keyword id="KW-0143">Chaperone</keyword>
<keyword id="KW-0963">Cytoplasm</keyword>
<keyword id="KW-0903">Direct protein sequencing</keyword>
<sequence length="94" mass="10253">MRLKPLGDRVVVKVIQAEEVTKGGVILPGTAKEKPQQGEVVAVGTGEYIDGKKVELEVKVGDRVIFSKYAGTEVKLDGEEYLLLRESDILAIIE</sequence>
<accession>Q60023</accession>
<protein>
    <recommendedName>
        <fullName evidence="1">Co-chaperonin GroES</fullName>
    </recommendedName>
    <alternativeName>
        <fullName evidence="1">10 kDa chaperonin</fullName>
    </alternativeName>
    <alternativeName>
        <fullName evidence="1">Chaperonin-10</fullName>
        <shortName evidence="1">Cpn10</shortName>
    </alternativeName>
</protein>
<reference key="1">
    <citation type="journal article" date="1998" name="Gene">
        <title>Sequence analysis and heterologous expression of the groE genes from Thermoanaerobacter sp. Rt8.G4.</title>
        <authorList>
            <person name="Truscott K.N."/>
            <person name="Scopes R.K."/>
        </authorList>
    </citation>
    <scope>NUCLEOTIDE SEQUENCE [GENOMIC DNA]</scope>
    <source>
        <strain>RT8.G4</strain>
    </source>
</reference>
<reference key="2">
    <citation type="journal article" date="1994" name="Eur. J. Biochem.">
        <title>Purification and characterization of chaperonin 60 and chaperonin 10 from the anaerobic thermophile Thermoanaerobacter brockii.</title>
        <authorList>
            <person name="Truscott K.N."/>
            <person name="Hoej P.B."/>
            <person name="Scopes R.K."/>
        </authorList>
    </citation>
    <scope>PROTEIN SEQUENCE OF 1-42</scope>
    <scope>CHARACTERIZATION</scope>
    <scope>MASS SPECTROMETRY</scope>
    <source>
        <strain>RT8.G4</strain>
    </source>
</reference>
<proteinExistence type="evidence at protein level"/>
<feature type="chain" id="PRO_0000174882" description="Co-chaperonin GroES">
    <location>
        <begin position="1"/>
        <end position="94"/>
    </location>
</feature>